<name>DING_STAAC</name>
<sequence>MGMATYAVVDLETTGNQLDFDDIIQIGITFVRNNQIIDTYHSMIRTNLEIPPFIQALTSIEENMLQQAPYFNQVAQEIYDKIKDCIFVAHNVDFDLNFIKKAFKDCNIQYRPKKVIDTLEIFKIAFPTDKSYQLSELAEAHGITLANAHRADEDAATTAKLMILAFEKFEKLPLDTLKQLYYLSKQLKYDLYDIFFEMVRQYDAKPLDKSYEKFEQIIYRKQVDFKKPTTNYNGSLKSLYSKAVDQLGLTYRPQQLYLAETILDQLMHSEKAMIEASLGSGKSLAYLLAALMYNIETGKHVMISTNTKLLQSQLLEKDIPAMNEALNFKINALLIKSKSDYISLGLISQILKDDTSNYEVNILKMQLLIWITETPSGDIQELNLKGGQKMYFDQKIETYVPARHDVHYYNFIKRNAQNIQIGITNHAHLIHSDVENSIYQLFDDCIVDEAHRLPDYALNQVTNELSYADIKYQLGLIGKNENEKLLKAIDQLEKQRILEKLDIAPIDIFGLKASMNEIHELNEQLFSTIFTIINDSDVYDDDIHRFHNVFTFETKDILKDLHAIIDKLNKTLEIFNGISHKTVKSLRKQLLYLKDKFKNIEQSLKAGHTSFISIKNLSQKSTIRLYVKDYAVKDVLTKQVLEKFKSLIFISGTLKFNHSFEAFKQLFNKDVHFNTFEVNTSLQSAKNTSVFIPSDVASYQYKNIDEYVASIVSYIIEYTTITSSKCLVLFTSYKMMHMVQDMLNELPEFEDYVVLTQQQNQNYKIVQQFNNFDKAILLGTSTFFEGFDFQANGIKCVMIAKLPFMNKHNAKYWLMDSEFTSTFKEYVLPDAVTRFRQGLGRLIRNENDRGIIVSFDDRLINSNYKNFFEQTLENYRQKKGDIQQFGKLLRQIQKKKK</sequence>
<gene>
    <name evidence="1" type="primary">dinG</name>
    <name type="ordered locus">SACOL1495</name>
</gene>
<feature type="chain" id="PRO_0000277593" description="3'-5' exonuclease DinG">
    <location>
        <begin position="1"/>
        <end position="897"/>
    </location>
</feature>
<feature type="domain" description="Exonuclease" evidence="1">
    <location>
        <begin position="8"/>
        <end position="161"/>
    </location>
</feature>
<feature type="domain" description="Helicase ATP-binding" evidence="1">
    <location>
        <begin position="241"/>
        <end position="496"/>
    </location>
</feature>
<feature type="domain" description="Helicase C-terminal" evidence="1">
    <location>
        <begin position="703"/>
        <end position="893"/>
    </location>
</feature>
<feature type="short sequence motif" description="DEAH box" evidence="1">
    <location>
        <begin position="448"/>
        <end position="451"/>
    </location>
</feature>
<feature type="binding site" evidence="1">
    <location>
        <begin position="276"/>
        <end position="283"/>
    </location>
    <ligand>
        <name>ATP</name>
        <dbReference type="ChEBI" id="CHEBI:30616"/>
    </ligand>
</feature>
<reference key="1">
    <citation type="journal article" date="2005" name="J. Bacteriol.">
        <title>Insights on evolution of virulence and resistance from the complete genome analysis of an early methicillin-resistant Staphylococcus aureus strain and a biofilm-producing methicillin-resistant Staphylococcus epidermidis strain.</title>
        <authorList>
            <person name="Gill S.R."/>
            <person name="Fouts D.E."/>
            <person name="Archer G.L."/>
            <person name="Mongodin E.F."/>
            <person name="DeBoy R.T."/>
            <person name="Ravel J."/>
            <person name="Paulsen I.T."/>
            <person name="Kolonay J.F."/>
            <person name="Brinkac L.M."/>
            <person name="Beanan M.J."/>
            <person name="Dodson R.J."/>
            <person name="Daugherty S.C."/>
            <person name="Madupu R."/>
            <person name="Angiuoli S.V."/>
            <person name="Durkin A.S."/>
            <person name="Haft D.H."/>
            <person name="Vamathevan J.J."/>
            <person name="Khouri H."/>
            <person name="Utterback T.R."/>
            <person name="Lee C."/>
            <person name="Dimitrov G."/>
            <person name="Jiang L."/>
            <person name="Qin H."/>
            <person name="Weidman J."/>
            <person name="Tran K."/>
            <person name="Kang K.H."/>
            <person name="Hance I.R."/>
            <person name="Nelson K.E."/>
            <person name="Fraser C.M."/>
        </authorList>
    </citation>
    <scope>NUCLEOTIDE SEQUENCE [LARGE SCALE GENOMIC DNA]</scope>
    <source>
        <strain>COL</strain>
    </source>
</reference>
<comment type="function">
    <text evidence="1">3'-5' exonuclease.</text>
</comment>
<comment type="similarity">
    <text evidence="1">Belongs to the helicase family. DinG subfamily. Type 2 sub-subfamily.</text>
</comment>
<accession>Q5HFW8</accession>
<keyword id="KW-0067">ATP-binding</keyword>
<keyword id="KW-0269">Exonuclease</keyword>
<keyword id="KW-0378">Hydrolase</keyword>
<keyword id="KW-0540">Nuclease</keyword>
<keyword id="KW-0547">Nucleotide-binding</keyword>
<proteinExistence type="inferred from homology"/>
<evidence type="ECO:0000255" key="1">
    <source>
        <dbReference type="HAMAP-Rule" id="MF_02206"/>
    </source>
</evidence>
<organism>
    <name type="scientific">Staphylococcus aureus (strain COL)</name>
    <dbReference type="NCBI Taxonomy" id="93062"/>
    <lineage>
        <taxon>Bacteria</taxon>
        <taxon>Bacillati</taxon>
        <taxon>Bacillota</taxon>
        <taxon>Bacilli</taxon>
        <taxon>Bacillales</taxon>
        <taxon>Staphylococcaceae</taxon>
        <taxon>Staphylococcus</taxon>
    </lineage>
</organism>
<dbReference type="EC" id="3.1.-.-" evidence="1"/>
<dbReference type="EMBL" id="CP000046">
    <property type="protein sequence ID" value="AAW36690.1"/>
    <property type="molecule type" value="Genomic_DNA"/>
</dbReference>
<dbReference type="RefSeq" id="WP_000525078.1">
    <property type="nucleotide sequence ID" value="NZ_JBGOFO010000003.1"/>
</dbReference>
<dbReference type="SMR" id="Q5HFW8"/>
<dbReference type="KEGG" id="sac:SACOL1495"/>
<dbReference type="HOGENOM" id="CLU_012117_1_1_9"/>
<dbReference type="Proteomes" id="UP000000530">
    <property type="component" value="Chromosome"/>
</dbReference>
<dbReference type="GO" id="GO:0005829">
    <property type="term" value="C:cytosol"/>
    <property type="evidence" value="ECO:0007669"/>
    <property type="project" value="TreeGrafter"/>
</dbReference>
<dbReference type="GO" id="GO:0008408">
    <property type="term" value="F:3'-5' exonuclease activity"/>
    <property type="evidence" value="ECO:0007669"/>
    <property type="project" value="UniProtKB-UniRule"/>
</dbReference>
<dbReference type="GO" id="GO:0005524">
    <property type="term" value="F:ATP binding"/>
    <property type="evidence" value="ECO:0007669"/>
    <property type="project" value="UniProtKB-UniRule"/>
</dbReference>
<dbReference type="GO" id="GO:0003677">
    <property type="term" value="F:DNA binding"/>
    <property type="evidence" value="ECO:0007669"/>
    <property type="project" value="InterPro"/>
</dbReference>
<dbReference type="GO" id="GO:0003887">
    <property type="term" value="F:DNA-directed DNA polymerase activity"/>
    <property type="evidence" value="ECO:0007669"/>
    <property type="project" value="InterPro"/>
</dbReference>
<dbReference type="GO" id="GO:0004386">
    <property type="term" value="F:helicase activity"/>
    <property type="evidence" value="ECO:0007669"/>
    <property type="project" value="InterPro"/>
</dbReference>
<dbReference type="GO" id="GO:0016818">
    <property type="term" value="F:hydrolase activity, acting on acid anhydrides, in phosphorus-containing anhydrides"/>
    <property type="evidence" value="ECO:0007669"/>
    <property type="project" value="InterPro"/>
</dbReference>
<dbReference type="GO" id="GO:0045004">
    <property type="term" value="P:DNA replication proofreading"/>
    <property type="evidence" value="ECO:0007669"/>
    <property type="project" value="TreeGrafter"/>
</dbReference>
<dbReference type="CDD" id="cd06127">
    <property type="entry name" value="DEDDh"/>
    <property type="match status" value="1"/>
</dbReference>
<dbReference type="FunFam" id="3.30.420.10:FF:000045">
    <property type="entry name" value="3'-5' exonuclease DinG"/>
    <property type="match status" value="1"/>
</dbReference>
<dbReference type="FunFam" id="3.40.50.300:FF:001816">
    <property type="entry name" value="3'-5' exonuclease DinG"/>
    <property type="match status" value="1"/>
</dbReference>
<dbReference type="FunFam" id="3.40.50.300:FF:000437">
    <property type="entry name" value="ATP-dependent DNA helicase DinG"/>
    <property type="match status" value="1"/>
</dbReference>
<dbReference type="Gene3D" id="3.40.50.300">
    <property type="entry name" value="P-loop containing nucleotide triphosphate hydrolases"/>
    <property type="match status" value="2"/>
</dbReference>
<dbReference type="Gene3D" id="3.30.420.10">
    <property type="entry name" value="Ribonuclease H-like superfamily/Ribonuclease H"/>
    <property type="match status" value="1"/>
</dbReference>
<dbReference type="HAMAP" id="MF_02206">
    <property type="entry name" value="DinG_exonucl"/>
    <property type="match status" value="1"/>
</dbReference>
<dbReference type="InterPro" id="IPR006555">
    <property type="entry name" value="ATP-dep_Helicase_C"/>
</dbReference>
<dbReference type="InterPro" id="IPR006310">
    <property type="entry name" value="DinG"/>
</dbReference>
<dbReference type="InterPro" id="IPR006054">
    <property type="entry name" value="DnaQ"/>
</dbReference>
<dbReference type="InterPro" id="IPR013520">
    <property type="entry name" value="Exonuclease_RNaseT/DNA_pol3"/>
</dbReference>
<dbReference type="InterPro" id="IPR014013">
    <property type="entry name" value="Helic_SF1/SF2_ATP-bd_DinG/Rad3"/>
</dbReference>
<dbReference type="InterPro" id="IPR027417">
    <property type="entry name" value="P-loop_NTPase"/>
</dbReference>
<dbReference type="InterPro" id="IPR012337">
    <property type="entry name" value="RNaseH-like_sf"/>
</dbReference>
<dbReference type="InterPro" id="IPR036397">
    <property type="entry name" value="RNaseH_sf"/>
</dbReference>
<dbReference type="NCBIfam" id="TIGR01407">
    <property type="entry name" value="dinG_rel"/>
    <property type="match status" value="1"/>
</dbReference>
<dbReference type="NCBIfam" id="TIGR00573">
    <property type="entry name" value="dnaq"/>
    <property type="match status" value="1"/>
</dbReference>
<dbReference type="PANTHER" id="PTHR30231">
    <property type="entry name" value="DNA POLYMERASE III SUBUNIT EPSILON"/>
    <property type="match status" value="1"/>
</dbReference>
<dbReference type="PANTHER" id="PTHR30231:SF41">
    <property type="entry name" value="DNA POLYMERASE III SUBUNIT EPSILON"/>
    <property type="match status" value="1"/>
</dbReference>
<dbReference type="Pfam" id="PF13307">
    <property type="entry name" value="Helicase_C_2"/>
    <property type="match status" value="1"/>
</dbReference>
<dbReference type="Pfam" id="PF00929">
    <property type="entry name" value="RNase_T"/>
    <property type="match status" value="1"/>
</dbReference>
<dbReference type="SMART" id="SM00479">
    <property type="entry name" value="EXOIII"/>
    <property type="match status" value="1"/>
</dbReference>
<dbReference type="SMART" id="SM00491">
    <property type="entry name" value="HELICc2"/>
    <property type="match status" value="1"/>
</dbReference>
<dbReference type="SUPFAM" id="SSF52540">
    <property type="entry name" value="P-loop containing nucleoside triphosphate hydrolases"/>
    <property type="match status" value="1"/>
</dbReference>
<dbReference type="SUPFAM" id="SSF53098">
    <property type="entry name" value="Ribonuclease H-like"/>
    <property type="match status" value="1"/>
</dbReference>
<dbReference type="PROSITE" id="PS51193">
    <property type="entry name" value="HELICASE_ATP_BIND_2"/>
    <property type="match status" value="1"/>
</dbReference>
<dbReference type="PROSITE" id="PS51194">
    <property type="entry name" value="HELICASE_CTER"/>
    <property type="match status" value="1"/>
</dbReference>
<protein>
    <recommendedName>
        <fullName evidence="1">3'-5' exonuclease DinG</fullName>
        <ecNumber evidence="1">3.1.-.-</ecNumber>
    </recommendedName>
</protein>